<organismHost>
    <name type="scientific">Hordeum vulgare</name>
    <name type="common">Barley</name>
    <dbReference type="NCBI Taxonomy" id="4513"/>
</organismHost>
<organismHost>
    <name type="scientific">Triticum aestivum</name>
    <name type="common">Wheat</name>
    <dbReference type="NCBI Taxonomy" id="4565"/>
</organismHost>
<comment type="function">
    <text evidence="2 3 4 7">Participates in the transport of viral genome to neighboring plant cells directly through plasmodesmata, without any budding (PubMed:18353960). TGBp2 and TGBp3 are necessary for intracellular delivery of TGBp1-containing vRNPs to plasmodesmata (Probable). Can gate plasmodesmata and increase their size exclusion limit (PubMed:19570874). Induces host actin cytoskeleton network thickening, which probably plays a major role in virus cell-to-cell movement (PubMed:25288925).</text>
</comment>
<comment type="subunit">
    <text evidence="2 5">Interacts with movement proteins TGB1 and TGB2 (PubMed:18353960). TGB1-TGB3-TGB2 complex formation is enhanced by ATP hydrolysis (PubMed:32730331).</text>
</comment>
<comment type="subcellular location">
    <subcellularLocation>
        <location evidence="3">Host cell junction</location>
        <location evidence="3">Host plasmodesma</location>
    </subcellularLocation>
    <subcellularLocation>
        <location evidence="4">Host endoplasmic reticulum membrane</location>
        <topology evidence="1">Multi-pass membrane protein</topology>
    </subcellularLocation>
    <subcellularLocation>
        <location evidence="4">Host cytoplasm</location>
        <location evidence="4">Host cytoskeleton</location>
    </subcellularLocation>
    <text evidence="3 4">Probably localizes to plasmodesmata-associated membrane compartments called peripheral membrane bodies (PMBs) (PubMed:19570874). Associates with host actin filaments (PubMed:25288925).</text>
</comment>
<comment type="domain">
    <text evidence="1">The 2nd transmembrane domain is involved in plasmodesmata targeting.</text>
</comment>
<comment type="miscellaneous">
    <text evidence="6">The genome of this virus consists of three linear, positive, single-stranded RNAs encapsidated in separate virions designated RNA-alpha, RNA-beta and RNA-gamma. Three proteins (alpha-A, beta-A and gamma-A) are translated directly from these genomic RNAs and the remaining proteins encoded on RNA-beta (beta-B, beta-C and beta-D) and RNA-gamma (gamma-B) are expressed via three subgenomic messenger RNAs.</text>
</comment>
<comment type="similarity">
    <text evidence="6">Belongs to the virgaviridae TGB3 movement protein family.</text>
</comment>
<evidence type="ECO:0000250" key="1">
    <source>
        <dbReference type="UniProtKB" id="Q9IV52"/>
    </source>
</evidence>
<evidence type="ECO:0000269" key="2">
    <source>
    </source>
</evidence>
<evidence type="ECO:0000269" key="3">
    <source>
    </source>
</evidence>
<evidence type="ECO:0000269" key="4">
    <source>
    </source>
</evidence>
<evidence type="ECO:0000269" key="5">
    <source>
    </source>
</evidence>
<evidence type="ECO:0000305" key="6"/>
<evidence type="ECO:0000305" key="7">
    <source>
    </source>
</evidence>
<feature type="chain" id="PRO_0000222490" description="Movement protein TGB3">
    <location>
        <begin position="1"/>
        <end position="155"/>
    </location>
</feature>
<feature type="topological domain" description="Cytoplasmic" evidence="1">
    <location>
        <begin position="1"/>
        <end position="59"/>
    </location>
</feature>
<feature type="transmembrane region" description="Helical" evidence="1">
    <location>
        <begin position="60"/>
        <end position="80"/>
    </location>
</feature>
<feature type="topological domain" description="Lumenal" evidence="1">
    <location>
        <begin position="81"/>
        <end position="130"/>
    </location>
</feature>
<feature type="transmembrane region" description="Helical" evidence="1">
    <location>
        <begin position="131"/>
        <end position="151"/>
    </location>
</feature>
<feature type="topological domain" description="Cytoplasmic" evidence="1">
    <location>
        <begin position="152"/>
        <end position="155"/>
    </location>
</feature>
<feature type="region of interest" description="Required for attachment to the host plasmodesmata-associated membrane compartments" evidence="7">
    <location>
        <begin position="150"/>
        <end position="155"/>
    </location>
</feature>
<feature type="short sequence motif" description="Involved in plasmodesmata targeting and virus cell-to-cell movement" evidence="1">
    <location>
        <begin position="89"/>
        <end position="93"/>
    </location>
</feature>
<feature type="mutagenesis site" description="Reduced cell-to-cell movement." evidence="3">
    <original>R</original>
    <variation>A</variation>
    <location>
        <position position="155"/>
    </location>
</feature>
<organism>
    <name type="scientific">Barley stripe mosaic virus</name>
    <name type="common">BSMV</name>
    <dbReference type="NCBI Taxonomy" id="12327"/>
    <lineage>
        <taxon>Viruses</taxon>
        <taxon>Riboviria</taxon>
        <taxon>Orthornavirae</taxon>
        <taxon>Kitrinoviricota</taxon>
        <taxon>Alsuviricetes</taxon>
        <taxon>Martellivirales</taxon>
        <taxon>Virgaviridae</taxon>
        <taxon>Hordeivirus</taxon>
    </lineage>
</organism>
<accession>P04868</accession>
<name>TGB3_BSMV</name>
<sequence length="155" mass="17377">MAMPHPLECCCPQCLPSSESFPIYGEQEIPCSETQAETTPVEKTVRANVLTDILDDHYYAILASLFIIALWLLYIYLSSIPTETGPYFYQDLNSVKIYGIGATNPEVIAAIHHWQKYPFGESPMWGGLISVLSILLKPLTLVFALSFFLLLSSKR</sequence>
<keyword id="KW-1031">Host cell junction</keyword>
<keyword id="KW-1035">Host cytoplasm</keyword>
<keyword id="KW-1037">Host cytoskeleton</keyword>
<keyword id="KW-1038">Host endoplasmic reticulum</keyword>
<keyword id="KW-1043">Host membrane</keyword>
<keyword id="KW-0472">Membrane</keyword>
<keyword id="KW-0597">Phosphoprotein</keyword>
<keyword id="KW-1185">Reference proteome</keyword>
<keyword id="KW-0812">Transmembrane</keyword>
<keyword id="KW-1133">Transmembrane helix</keyword>
<keyword id="KW-0813">Transport</keyword>
<keyword id="KW-0916">Viral movement protein</keyword>
<dbReference type="EMBL" id="X03854">
    <property type="protein sequence ID" value="CAA27487.1"/>
    <property type="molecule type" value="Genomic_RNA"/>
</dbReference>
<dbReference type="PIR" id="A04193">
    <property type="entry name" value="WMBV7B"/>
</dbReference>
<dbReference type="RefSeq" id="NP_604489.1">
    <property type="nucleotide sequence ID" value="NC_003481.1"/>
</dbReference>
<dbReference type="GeneID" id="962679"/>
<dbReference type="KEGG" id="vg:962679"/>
<dbReference type="OrthoDB" id="26872at10239"/>
<dbReference type="Proteomes" id="UP000001667">
    <property type="component" value="Genome"/>
</dbReference>
<dbReference type="GO" id="GO:0044167">
    <property type="term" value="C:host cell endoplasmic reticulum membrane"/>
    <property type="evidence" value="ECO:0007669"/>
    <property type="project" value="UniProtKB-SubCell"/>
</dbReference>
<dbReference type="GO" id="GO:0044219">
    <property type="term" value="C:host cell plasmodesma"/>
    <property type="evidence" value="ECO:0007669"/>
    <property type="project" value="UniProtKB-SubCell"/>
</dbReference>
<dbReference type="GO" id="GO:0044163">
    <property type="term" value="C:host cytoskeleton"/>
    <property type="evidence" value="ECO:0007669"/>
    <property type="project" value="UniProtKB-SubCell"/>
</dbReference>
<dbReference type="GO" id="GO:0016020">
    <property type="term" value="C:membrane"/>
    <property type="evidence" value="ECO:0007669"/>
    <property type="project" value="UniProtKB-KW"/>
</dbReference>
<dbReference type="GO" id="GO:0046740">
    <property type="term" value="P:transport of virus in host, cell to cell"/>
    <property type="evidence" value="ECO:0007669"/>
    <property type="project" value="UniProtKB-KW"/>
</dbReference>
<dbReference type="InterPro" id="IPR007617">
    <property type="entry name" value="Viral_beta_CD"/>
</dbReference>
<dbReference type="Pfam" id="PF04530">
    <property type="entry name" value="Viral_Beta_CD"/>
    <property type="match status" value="1"/>
</dbReference>
<protein>
    <recommendedName>
        <fullName>Movement protein TGB3</fullName>
    </recommendedName>
    <alternativeName>
        <fullName>17 kDa protein</fullName>
    </alternativeName>
    <alternativeName>
        <fullName>Beta-C protein</fullName>
    </alternativeName>
    <alternativeName>
        <fullName>Triple gene block 3 protein</fullName>
        <shortName>TGBp3</shortName>
    </alternativeName>
</protein>
<proteinExistence type="evidence at protein level"/>
<reference key="1">
    <citation type="journal article" date="1986" name="Nucleic Acids Res.">
        <title>The complete nucleotide sequence of RNA beta from the type strain of barley stripe mosaic virus.</title>
        <authorList>
            <person name="Gustafson G."/>
            <person name="Armour S.L."/>
        </authorList>
    </citation>
    <scope>NUCLEOTIDE SEQUENCE [GENOMIC RNA]</scope>
    <source>
        <strain>ATCC PV43</strain>
    </source>
</reference>
<reference key="2">
    <citation type="journal article" date="2008" name="J. Virol.">
        <title>Triple gene block protein interactions involved in movement of Barley stripe mosaic virus.</title>
        <authorList>
            <person name="Lim H.S."/>
            <person name="Bragg J.N."/>
            <person name="Ganesan U."/>
            <person name="Lawrence D.M."/>
            <person name="Yu J."/>
            <person name="Isogai M."/>
            <person name="Hammond J."/>
            <person name="Jackson A.O."/>
        </authorList>
    </citation>
    <scope>INTERACTION WITH MOVEMENT PROTEIN TGB1</scope>
    <scope>INTERACTION WITH MOVEMENT PROTEIN TGB2</scope>
    <scope>FUNCTION</scope>
</reference>
<reference key="3">
    <citation type="journal article" date="2009" name="J. Virol.">
        <title>Subcellular localization of the barley stripe mosaic virus triple gene block proteins.</title>
        <authorList>
            <person name="Lim H.S."/>
            <person name="Bragg J.N."/>
            <person name="Ganesan U."/>
            <person name="Ruzin S."/>
            <person name="Schichnes D."/>
            <person name="Lee M.Y."/>
            <person name="Vaira A.M."/>
            <person name="Ryu K.H."/>
            <person name="Hammond J."/>
            <person name="Jackson A.O."/>
        </authorList>
    </citation>
    <scope>SUBCELLULAR LOCATION</scope>
    <scope>MUTAGENESIS OF ARG-155</scope>
    <scope>FUNCTION</scope>
</reference>
<reference key="4">
    <citation type="journal article" date="2013" name="Plant Pathol. J.">
        <title>Actin Cytoskeleton and Golgi Involvement in Barley stripe mosaic virus Movement and Cell Wall Localization of Triple Gene Block Proteins.</title>
        <authorList>
            <person name="Lim H.S."/>
            <person name="Lee M.Y."/>
            <person name="Moon J.S."/>
            <person name="Moon J.K."/>
            <person name="Yu Y.M."/>
            <person name="Cho I.S."/>
            <person name="Bae H."/>
            <person name="deBoer M."/>
            <person name="Ju H."/>
            <person name="Hammond J."/>
            <person name="Jackson A.O."/>
        </authorList>
    </citation>
    <scope>FUNCTION</scope>
    <scope>SUBCELLULAR LOCATION</scope>
</reference>
<reference key="5">
    <citation type="journal article" date="2020" name="PLoS Pathog.">
        <title>The Barley stripe mosaic virus gammab protein promotes viral cell-to-cell movement by enhancing ATPase-mediated assembly of ribonucleoprotein movement complexes.</title>
        <authorList>
            <person name="Jiang Z."/>
            <person name="Zhang K."/>
            <person name="Li Z."/>
            <person name="Li Z."/>
            <person name="Yang M."/>
            <person name="Jin X."/>
            <person name="Cao Q."/>
            <person name="Wang X."/>
            <person name="Yue N."/>
            <person name="Li D."/>
            <person name="Zhang Y."/>
        </authorList>
    </citation>
    <scope>IDENTIFICATION IN THE TGB1-TGB2-TGB3 COMPLEX</scope>
</reference>